<accession>Q0CFD4</accession>
<name>UBA4_ASPTN</name>
<comment type="function">
    <text evidence="1">Plays a central role in 2-thiolation of mcm(5)S(2)U at tRNA wobble positions of cytosolic tRNA(Lys), tRNA(Glu) and tRNA(Gln). Also essential during biosynthesis of the molybdenum cofactor. Acts by mediating the C-terminal thiocarboxylation of sulfur carriers urm1 and mocs2a. Its N-terminus first activates urm1 and mocs2a as acyl-adenylates (-COAMP), then the persulfide sulfur on the catalytic cysteine is transferred to urm1 and mocs2a to form thiocarboxylation (-COSH) of their C-terminus. The reaction probably involves hydrogen sulfide that is generated from the persulfide intermediate and that acts as a nucleophile towards urm1 and mocs2a. Subsequently, a transient disulfide bond is formed. Does not use thiosulfate as sulfur donor; nfs1 probably acting as a sulfur donor for thiocarboxylation reactions (By similarity).</text>
</comment>
<comment type="catalytic activity">
    <reaction evidence="3">
        <text>[molybdopterin-synthase sulfur-carrier protein]-C-terminal Gly-Gly + ATP + H(+) = [molybdopterin-synthase sulfur-carrier protein]-C-terminal Gly-Gly-AMP + diphosphate</text>
        <dbReference type="Rhea" id="RHEA:43616"/>
        <dbReference type="Rhea" id="RHEA-COMP:12159"/>
        <dbReference type="Rhea" id="RHEA-COMP:12202"/>
        <dbReference type="ChEBI" id="CHEBI:15378"/>
        <dbReference type="ChEBI" id="CHEBI:30616"/>
        <dbReference type="ChEBI" id="CHEBI:33019"/>
        <dbReference type="ChEBI" id="CHEBI:90618"/>
        <dbReference type="ChEBI" id="CHEBI:90778"/>
        <dbReference type="EC" id="2.7.7.80"/>
    </reaction>
</comment>
<comment type="catalytic activity">
    <reaction evidence="3">
        <text>[molybdopterin-synthase sulfur-carrier protein]-C-terminal Gly-Gly-AMP + S-sulfanyl-L-cysteinyl-[cysteine desulfurase] + AH2 = [molybdopterin-synthase sulfur-carrier protein]-C-terminal-Gly-aminoethanethioate + L-cysteinyl-[cysteine desulfurase] + A + AMP + 2 H(+)</text>
        <dbReference type="Rhea" id="RHEA:48612"/>
        <dbReference type="Rhea" id="RHEA-COMP:12157"/>
        <dbReference type="Rhea" id="RHEA-COMP:12158"/>
        <dbReference type="Rhea" id="RHEA-COMP:12159"/>
        <dbReference type="Rhea" id="RHEA-COMP:19907"/>
        <dbReference type="ChEBI" id="CHEBI:13193"/>
        <dbReference type="ChEBI" id="CHEBI:15378"/>
        <dbReference type="ChEBI" id="CHEBI:17499"/>
        <dbReference type="ChEBI" id="CHEBI:29950"/>
        <dbReference type="ChEBI" id="CHEBI:61963"/>
        <dbReference type="ChEBI" id="CHEBI:90618"/>
        <dbReference type="ChEBI" id="CHEBI:232372"/>
        <dbReference type="ChEBI" id="CHEBI:456215"/>
        <dbReference type="EC" id="2.8.1.11"/>
    </reaction>
</comment>
<comment type="cofactor">
    <cofactor evidence="3">
        <name>Zn(2+)</name>
        <dbReference type="ChEBI" id="CHEBI:29105"/>
    </cofactor>
    <text evidence="3">Binds 1 zinc ion per subunit.</text>
</comment>
<comment type="pathway">
    <text evidence="3">tRNA modification; 5-methoxycarbonylmethyl-2-thiouridine-tRNA biosynthesis.</text>
</comment>
<comment type="pathway">
    <text evidence="3">Cofactor biosynthesis; molybdopterin biosynthesis.</text>
</comment>
<comment type="subcellular location">
    <subcellularLocation>
        <location evidence="2">Cytoplasm</location>
        <location evidence="2">Cytosol</location>
    </subcellularLocation>
</comment>
<comment type="similarity">
    <text evidence="3">In the N-terminal section; belongs to the HesA/MoeB/ThiF family. UBA4 subfamily.</text>
</comment>
<evidence type="ECO:0000250" key="1"/>
<evidence type="ECO:0000250" key="2">
    <source>
        <dbReference type="UniProtKB" id="P38820"/>
    </source>
</evidence>
<evidence type="ECO:0000255" key="3">
    <source>
        <dbReference type="HAMAP-Rule" id="MF_03049"/>
    </source>
</evidence>
<evidence type="ECO:0000256" key="4">
    <source>
        <dbReference type="SAM" id="MobiDB-lite"/>
    </source>
</evidence>
<proteinExistence type="inferred from homology"/>
<reference key="1">
    <citation type="submission" date="2005-09" db="EMBL/GenBank/DDBJ databases">
        <title>Annotation of the Aspergillus terreus NIH2624 genome.</title>
        <authorList>
            <person name="Birren B.W."/>
            <person name="Lander E.S."/>
            <person name="Galagan J.E."/>
            <person name="Nusbaum C."/>
            <person name="Devon K."/>
            <person name="Henn M."/>
            <person name="Ma L.-J."/>
            <person name="Jaffe D.B."/>
            <person name="Butler J."/>
            <person name="Alvarez P."/>
            <person name="Gnerre S."/>
            <person name="Grabherr M."/>
            <person name="Kleber M."/>
            <person name="Mauceli E.W."/>
            <person name="Brockman W."/>
            <person name="Rounsley S."/>
            <person name="Young S.K."/>
            <person name="LaButti K."/>
            <person name="Pushparaj V."/>
            <person name="DeCaprio D."/>
            <person name="Crawford M."/>
            <person name="Koehrsen M."/>
            <person name="Engels R."/>
            <person name="Montgomery P."/>
            <person name="Pearson M."/>
            <person name="Howarth C."/>
            <person name="Larson L."/>
            <person name="Luoma S."/>
            <person name="White J."/>
            <person name="Alvarado L."/>
            <person name="Kodira C.D."/>
            <person name="Zeng Q."/>
            <person name="Oleary S."/>
            <person name="Yandava C."/>
            <person name="Denning D.W."/>
            <person name="Nierman W.C."/>
            <person name="Milne T."/>
            <person name="Madden K."/>
        </authorList>
    </citation>
    <scope>NUCLEOTIDE SEQUENCE [LARGE SCALE GENOMIC DNA]</scope>
    <source>
        <strain>NIH 2624 / FGSC A1156</strain>
    </source>
</reference>
<sequence length="484" mass="52219">MDDLESTCASLRAQISATETQLAGLKRALHEAEQAAAHAKAQSAAATTAGDNHDKPRRWPLLDEEYRRYGRQMIVPQLGLPGQLKLRSARVLIVGAGGLGCPAALYLAGAGVGTLGLIDGDMVDVSNLHRQVLHRSANVGKLKVDSAIEYLRELNPHPTYIPHRAHLTPQEAPEIFQNYDVILDCTDNPATRYLISDTAVLLGKPLVSASALRTEGQLMVLNNPPRPAGDKTGGPCYRCVFPKPPPANSILSCADGGILGPVVGTMGVLQALEAIKVITSTEDEVRPPSLHIFSAYSSPPFRSIKLRSRRANCAVCSAERQVTLDTLRSGLTDYVFFCGSVSPEAVLTAEERIAPREYRAMYPAPTEGAPEKTPTLIDVREKVQYDICNLAESINIPISTIQASAAGSGDETGSSLPAWLPPEIASTDSTDPIYVVCRMGNDSQLAVRRLKELGLDRGGARVVADIQGGFRAWREQVDPEWPEY</sequence>
<feature type="chain" id="PRO_0000369222" description="Adenylyltransferase and sulfurtransferase uba4">
    <location>
        <begin position="1"/>
        <end position="484"/>
    </location>
</feature>
<feature type="domain" description="Rhodanese" evidence="3">
    <location>
        <begin position="370"/>
        <end position="482"/>
    </location>
</feature>
<feature type="region of interest" description="Disordered" evidence="4">
    <location>
        <begin position="39"/>
        <end position="58"/>
    </location>
</feature>
<feature type="compositionally biased region" description="Low complexity" evidence="4">
    <location>
        <begin position="39"/>
        <end position="49"/>
    </location>
</feature>
<feature type="active site" description="Glycyl thioester intermediate; for adenylyltransferase activity" evidence="3">
    <location>
        <position position="253"/>
    </location>
</feature>
<feature type="active site" description="Cysteine persulfide intermediate; for sulfurtransferase activity" evidence="3">
    <location>
        <position position="437"/>
    </location>
</feature>
<feature type="binding site" evidence="3">
    <location>
        <position position="98"/>
    </location>
    <ligand>
        <name>ATP</name>
        <dbReference type="ChEBI" id="CHEBI:30616"/>
    </ligand>
</feature>
<feature type="binding site" evidence="3">
    <location>
        <position position="119"/>
    </location>
    <ligand>
        <name>ATP</name>
        <dbReference type="ChEBI" id="CHEBI:30616"/>
    </ligand>
</feature>
<feature type="binding site" evidence="3">
    <location>
        <begin position="126"/>
        <end position="130"/>
    </location>
    <ligand>
        <name>ATP</name>
        <dbReference type="ChEBI" id="CHEBI:30616"/>
    </ligand>
</feature>
<feature type="binding site" evidence="3">
    <location>
        <position position="143"/>
    </location>
    <ligand>
        <name>ATP</name>
        <dbReference type="ChEBI" id="CHEBI:30616"/>
    </ligand>
</feature>
<feature type="binding site" evidence="3">
    <location>
        <begin position="187"/>
        <end position="188"/>
    </location>
    <ligand>
        <name>ATP</name>
        <dbReference type="ChEBI" id="CHEBI:30616"/>
    </ligand>
</feature>
<feature type="binding site" evidence="3">
    <location>
        <position position="236"/>
    </location>
    <ligand>
        <name>Zn(2+)</name>
        <dbReference type="ChEBI" id="CHEBI:29105"/>
    </ligand>
</feature>
<feature type="binding site" evidence="3">
    <location>
        <position position="239"/>
    </location>
    <ligand>
        <name>Zn(2+)</name>
        <dbReference type="ChEBI" id="CHEBI:29105"/>
    </ligand>
</feature>
<feature type="binding site" evidence="3">
    <location>
        <position position="313"/>
    </location>
    <ligand>
        <name>Zn(2+)</name>
        <dbReference type="ChEBI" id="CHEBI:29105"/>
    </ligand>
</feature>
<feature type="binding site" evidence="3">
    <location>
        <position position="316"/>
    </location>
    <ligand>
        <name>Zn(2+)</name>
        <dbReference type="ChEBI" id="CHEBI:29105"/>
    </ligand>
</feature>
<dbReference type="EC" id="2.7.7.80" evidence="3"/>
<dbReference type="EC" id="2.8.1.11" evidence="3"/>
<dbReference type="EMBL" id="CH476604">
    <property type="protein sequence ID" value="EAU31862.1"/>
    <property type="molecule type" value="Genomic_DNA"/>
</dbReference>
<dbReference type="RefSeq" id="XP_001216221.1">
    <property type="nucleotide sequence ID" value="XM_001216221.1"/>
</dbReference>
<dbReference type="SMR" id="Q0CFD4"/>
<dbReference type="STRING" id="341663.Q0CFD4"/>
<dbReference type="EnsemblFungi" id="EAU31862">
    <property type="protein sequence ID" value="EAU31862"/>
    <property type="gene ID" value="ATEG_07600"/>
</dbReference>
<dbReference type="GeneID" id="4322786"/>
<dbReference type="VEuPathDB" id="FungiDB:ATEG_07600"/>
<dbReference type="eggNOG" id="KOG2017">
    <property type="taxonomic scope" value="Eukaryota"/>
</dbReference>
<dbReference type="HOGENOM" id="CLU_013325_1_2_1"/>
<dbReference type="OMA" id="IPDVGMD"/>
<dbReference type="OrthoDB" id="10261062at2759"/>
<dbReference type="UniPathway" id="UPA00344"/>
<dbReference type="UniPathway" id="UPA00988"/>
<dbReference type="Proteomes" id="UP000007963">
    <property type="component" value="Unassembled WGS sequence"/>
</dbReference>
<dbReference type="GO" id="GO:0005829">
    <property type="term" value="C:cytosol"/>
    <property type="evidence" value="ECO:0007669"/>
    <property type="project" value="InterPro"/>
</dbReference>
<dbReference type="GO" id="GO:0070733">
    <property type="term" value="F:AMPylase activity"/>
    <property type="evidence" value="ECO:0007669"/>
    <property type="project" value="EnsemblFungi"/>
</dbReference>
<dbReference type="GO" id="GO:0005524">
    <property type="term" value="F:ATP binding"/>
    <property type="evidence" value="ECO:0007669"/>
    <property type="project" value="UniProtKB-KW"/>
</dbReference>
<dbReference type="GO" id="GO:0042802">
    <property type="term" value="F:identical protein binding"/>
    <property type="evidence" value="ECO:0007669"/>
    <property type="project" value="EnsemblFungi"/>
</dbReference>
<dbReference type="GO" id="GO:0046872">
    <property type="term" value="F:metal ion binding"/>
    <property type="evidence" value="ECO:0007669"/>
    <property type="project" value="UniProtKB-KW"/>
</dbReference>
<dbReference type="GO" id="GO:0061605">
    <property type="term" value="F:molybdopterin-synthase adenylyltransferase activity"/>
    <property type="evidence" value="ECO:0007669"/>
    <property type="project" value="UniProtKB-EC"/>
</dbReference>
<dbReference type="GO" id="GO:0061604">
    <property type="term" value="F:molybdopterin-synthase sulfurtransferase activity"/>
    <property type="evidence" value="ECO:0007669"/>
    <property type="project" value="UniProtKB-EC"/>
</dbReference>
<dbReference type="GO" id="GO:0004792">
    <property type="term" value="F:thiosulfate-cyanide sulfurtransferase activity"/>
    <property type="evidence" value="ECO:0007669"/>
    <property type="project" value="EnsemblFungi"/>
</dbReference>
<dbReference type="GO" id="GO:0042292">
    <property type="term" value="F:URM1 activating enzyme activity"/>
    <property type="evidence" value="ECO:0007669"/>
    <property type="project" value="EnsemblFungi"/>
</dbReference>
<dbReference type="GO" id="GO:0007114">
    <property type="term" value="P:cell budding"/>
    <property type="evidence" value="ECO:0007669"/>
    <property type="project" value="EnsemblFungi"/>
</dbReference>
<dbReference type="GO" id="GO:0034599">
    <property type="term" value="P:cellular response to oxidative stress"/>
    <property type="evidence" value="ECO:0007669"/>
    <property type="project" value="EnsemblFungi"/>
</dbReference>
<dbReference type="GO" id="GO:0001403">
    <property type="term" value="P:invasive growth in response to glucose limitation"/>
    <property type="evidence" value="ECO:0007669"/>
    <property type="project" value="EnsemblFungi"/>
</dbReference>
<dbReference type="GO" id="GO:0006777">
    <property type="term" value="P:Mo-molybdopterin cofactor biosynthetic process"/>
    <property type="evidence" value="ECO:0007669"/>
    <property type="project" value="UniProtKB-UniRule"/>
</dbReference>
<dbReference type="GO" id="GO:0032447">
    <property type="term" value="P:protein urmylation"/>
    <property type="evidence" value="ECO:0007669"/>
    <property type="project" value="EnsemblFungi"/>
</dbReference>
<dbReference type="GO" id="GO:2000220">
    <property type="term" value="P:regulation of pseudohyphal growth"/>
    <property type="evidence" value="ECO:0007669"/>
    <property type="project" value="EnsemblFungi"/>
</dbReference>
<dbReference type="GO" id="GO:0002143">
    <property type="term" value="P:tRNA wobble position uridine thiolation"/>
    <property type="evidence" value="ECO:0007669"/>
    <property type="project" value="EnsemblFungi"/>
</dbReference>
<dbReference type="CDD" id="cd00757">
    <property type="entry name" value="ThiF_MoeB_HesA_family"/>
    <property type="match status" value="1"/>
</dbReference>
<dbReference type="FunFam" id="3.40.50.720:FF:000033">
    <property type="entry name" value="Adenylyltransferase and sulfurtransferase MOCS3"/>
    <property type="match status" value="1"/>
</dbReference>
<dbReference type="FunFam" id="3.40.250.10:FF:000096">
    <property type="entry name" value="Adenylyltransferase and sulfurtransferase uba4"/>
    <property type="match status" value="1"/>
</dbReference>
<dbReference type="Gene3D" id="3.40.50.720">
    <property type="entry name" value="NAD(P)-binding Rossmann-like Domain"/>
    <property type="match status" value="1"/>
</dbReference>
<dbReference type="Gene3D" id="3.40.250.10">
    <property type="entry name" value="Rhodanese-like domain"/>
    <property type="match status" value="1"/>
</dbReference>
<dbReference type="HAMAP" id="MF_03049">
    <property type="entry name" value="MOCS3_Uba4"/>
    <property type="match status" value="1"/>
</dbReference>
<dbReference type="InterPro" id="IPR028885">
    <property type="entry name" value="MOCS3/Uba4"/>
</dbReference>
<dbReference type="InterPro" id="IPR001763">
    <property type="entry name" value="Rhodanese-like_dom"/>
</dbReference>
<dbReference type="InterPro" id="IPR036873">
    <property type="entry name" value="Rhodanese-like_dom_sf"/>
</dbReference>
<dbReference type="InterPro" id="IPR045886">
    <property type="entry name" value="ThiF/MoeB/HesA"/>
</dbReference>
<dbReference type="InterPro" id="IPR000594">
    <property type="entry name" value="ThiF_NAD_FAD-bd"/>
</dbReference>
<dbReference type="InterPro" id="IPR035985">
    <property type="entry name" value="Ubiquitin-activating_enz"/>
</dbReference>
<dbReference type="PANTHER" id="PTHR10953:SF102">
    <property type="entry name" value="ADENYLYLTRANSFERASE AND SULFURTRANSFERASE MOCS3"/>
    <property type="match status" value="1"/>
</dbReference>
<dbReference type="PANTHER" id="PTHR10953">
    <property type="entry name" value="UBIQUITIN-ACTIVATING ENZYME E1"/>
    <property type="match status" value="1"/>
</dbReference>
<dbReference type="Pfam" id="PF00581">
    <property type="entry name" value="Rhodanese"/>
    <property type="match status" value="1"/>
</dbReference>
<dbReference type="Pfam" id="PF00899">
    <property type="entry name" value="ThiF"/>
    <property type="match status" value="1"/>
</dbReference>
<dbReference type="SMART" id="SM00450">
    <property type="entry name" value="RHOD"/>
    <property type="match status" value="1"/>
</dbReference>
<dbReference type="SUPFAM" id="SSF69572">
    <property type="entry name" value="Activating enzymes of the ubiquitin-like proteins"/>
    <property type="match status" value="1"/>
</dbReference>
<dbReference type="PROSITE" id="PS50206">
    <property type="entry name" value="RHODANESE_3"/>
    <property type="match status" value="1"/>
</dbReference>
<protein>
    <recommendedName>
        <fullName evidence="3">Adenylyltransferase and sulfurtransferase uba4</fullName>
    </recommendedName>
    <alternativeName>
        <fullName evidence="3">Common component for nitrate reductase and xanthine dehydrogenase protein F</fullName>
    </alternativeName>
    <alternativeName>
        <fullName evidence="3">Ubiquitin-like protein activator 4</fullName>
    </alternativeName>
    <domain>
        <recommendedName>
            <fullName evidence="3">Molybdopterin-synthase adenylyltransferase</fullName>
            <ecNumber evidence="3">2.7.7.80</ecNumber>
        </recommendedName>
        <alternativeName>
            <fullName evidence="3">Adenylyltransferase uba4</fullName>
        </alternativeName>
        <alternativeName>
            <fullName evidence="3">Sulfur carrier protein MOCS2A adenylyltransferase</fullName>
        </alternativeName>
    </domain>
    <domain>
        <recommendedName>
            <fullName evidence="3">Molybdopterin-synthase sulfurtransferase</fullName>
            <ecNumber evidence="3">2.8.1.11</ecNumber>
        </recommendedName>
        <alternativeName>
            <fullName evidence="3">Sulfur carrier protein MOCS2A sulfurtransferase</fullName>
        </alternativeName>
        <alternativeName>
            <fullName evidence="3">Sulfurtransferase uba4</fullName>
        </alternativeName>
    </domain>
</protein>
<keyword id="KW-0067">ATP-binding</keyword>
<keyword id="KW-0963">Cytoplasm</keyword>
<keyword id="KW-0479">Metal-binding</keyword>
<keyword id="KW-0501">Molybdenum cofactor biosynthesis</keyword>
<keyword id="KW-0511">Multifunctional enzyme</keyword>
<keyword id="KW-0547">Nucleotide-binding</keyword>
<keyword id="KW-0548">Nucleotidyltransferase</keyword>
<keyword id="KW-1185">Reference proteome</keyword>
<keyword id="KW-0808">Transferase</keyword>
<keyword id="KW-0819">tRNA processing</keyword>
<keyword id="KW-0833">Ubl conjugation pathway</keyword>
<keyword id="KW-0862">Zinc</keyword>
<gene>
    <name evidence="3" type="primary">uba4</name>
    <name evidence="3" type="synonym">cnxF</name>
    <name type="ORF">ATEG_07600</name>
</gene>
<organism>
    <name type="scientific">Aspergillus terreus (strain NIH 2624 / FGSC A1156)</name>
    <dbReference type="NCBI Taxonomy" id="341663"/>
    <lineage>
        <taxon>Eukaryota</taxon>
        <taxon>Fungi</taxon>
        <taxon>Dikarya</taxon>
        <taxon>Ascomycota</taxon>
        <taxon>Pezizomycotina</taxon>
        <taxon>Eurotiomycetes</taxon>
        <taxon>Eurotiomycetidae</taxon>
        <taxon>Eurotiales</taxon>
        <taxon>Aspergillaceae</taxon>
        <taxon>Aspergillus</taxon>
        <taxon>Aspergillus subgen. Circumdati</taxon>
    </lineage>
</organism>